<name>MINC_DICNV</name>
<feature type="chain" id="PRO_1000191241" description="Probable septum site-determining protein MinC">
    <location>
        <begin position="1"/>
        <end position="244"/>
    </location>
</feature>
<gene>
    <name evidence="1" type="primary">minC</name>
    <name type="ordered locus">DNO_0915</name>
</gene>
<dbReference type="EMBL" id="CP000513">
    <property type="protein sequence ID" value="ABQ13224.1"/>
    <property type="molecule type" value="Genomic_DNA"/>
</dbReference>
<dbReference type="RefSeq" id="WP_012031231.1">
    <property type="nucleotide sequence ID" value="NC_009446.1"/>
</dbReference>
<dbReference type="SMR" id="A5EY80"/>
<dbReference type="STRING" id="246195.DNO_0915"/>
<dbReference type="KEGG" id="dno:DNO_0915"/>
<dbReference type="eggNOG" id="COG0850">
    <property type="taxonomic scope" value="Bacteria"/>
</dbReference>
<dbReference type="HOGENOM" id="CLU_067812_0_1_6"/>
<dbReference type="OrthoDB" id="9794530at2"/>
<dbReference type="Proteomes" id="UP000000248">
    <property type="component" value="Chromosome"/>
</dbReference>
<dbReference type="GO" id="GO:0000902">
    <property type="term" value="P:cell morphogenesis"/>
    <property type="evidence" value="ECO:0007669"/>
    <property type="project" value="InterPro"/>
</dbReference>
<dbReference type="GO" id="GO:0000917">
    <property type="term" value="P:division septum assembly"/>
    <property type="evidence" value="ECO:0007669"/>
    <property type="project" value="UniProtKB-KW"/>
</dbReference>
<dbReference type="GO" id="GO:0051302">
    <property type="term" value="P:regulation of cell division"/>
    <property type="evidence" value="ECO:0007669"/>
    <property type="project" value="InterPro"/>
</dbReference>
<dbReference type="GO" id="GO:1901891">
    <property type="term" value="P:regulation of cell septum assembly"/>
    <property type="evidence" value="ECO:0007669"/>
    <property type="project" value="InterPro"/>
</dbReference>
<dbReference type="Gene3D" id="2.160.20.70">
    <property type="match status" value="1"/>
</dbReference>
<dbReference type="Gene3D" id="3.30.70.260">
    <property type="match status" value="1"/>
</dbReference>
<dbReference type="HAMAP" id="MF_00267">
    <property type="entry name" value="MinC"/>
    <property type="match status" value="1"/>
</dbReference>
<dbReference type="InterPro" id="IPR016098">
    <property type="entry name" value="CAP/MinC_C"/>
</dbReference>
<dbReference type="InterPro" id="IPR013033">
    <property type="entry name" value="MinC"/>
</dbReference>
<dbReference type="InterPro" id="IPR036145">
    <property type="entry name" value="MinC_C_sf"/>
</dbReference>
<dbReference type="InterPro" id="IPR007874">
    <property type="entry name" value="MinC_N"/>
</dbReference>
<dbReference type="InterPro" id="IPR005526">
    <property type="entry name" value="Septum_form_inhib_MinC_C"/>
</dbReference>
<dbReference type="NCBIfam" id="TIGR01222">
    <property type="entry name" value="minC"/>
    <property type="match status" value="1"/>
</dbReference>
<dbReference type="PANTHER" id="PTHR34108">
    <property type="entry name" value="SEPTUM SITE-DETERMINING PROTEIN MINC"/>
    <property type="match status" value="1"/>
</dbReference>
<dbReference type="PANTHER" id="PTHR34108:SF1">
    <property type="entry name" value="SEPTUM SITE-DETERMINING PROTEIN MINC"/>
    <property type="match status" value="1"/>
</dbReference>
<dbReference type="Pfam" id="PF03775">
    <property type="entry name" value="MinC_C"/>
    <property type="match status" value="1"/>
</dbReference>
<dbReference type="Pfam" id="PF05209">
    <property type="entry name" value="MinC_N"/>
    <property type="match status" value="1"/>
</dbReference>
<dbReference type="SUPFAM" id="SSF63848">
    <property type="entry name" value="Cell-division inhibitor MinC, C-terminal domain"/>
    <property type="match status" value="1"/>
</dbReference>
<reference key="1">
    <citation type="journal article" date="2007" name="Nat. Biotechnol.">
        <title>Genome sequence and identification of candidate vaccine antigens from the animal pathogen Dichelobacter nodosus.</title>
        <authorList>
            <person name="Myers G.S.A."/>
            <person name="Parker D."/>
            <person name="Al-Hasani K."/>
            <person name="Kennan R.M."/>
            <person name="Seemann T."/>
            <person name="Ren Q."/>
            <person name="Badger J.H."/>
            <person name="Selengut J.D."/>
            <person name="Deboy R.T."/>
            <person name="Tettelin H."/>
            <person name="Boyce J.D."/>
            <person name="McCarl V.P."/>
            <person name="Han X."/>
            <person name="Nelson W.C."/>
            <person name="Madupu R."/>
            <person name="Mohamoud Y."/>
            <person name="Holley T."/>
            <person name="Fedorova N."/>
            <person name="Khouri H."/>
            <person name="Bottomley S.P."/>
            <person name="Whittington R.J."/>
            <person name="Adler B."/>
            <person name="Songer J.G."/>
            <person name="Rood J.I."/>
            <person name="Paulsen I.T."/>
        </authorList>
    </citation>
    <scope>NUCLEOTIDE SEQUENCE [LARGE SCALE GENOMIC DNA]</scope>
    <source>
        <strain>VCS1703A</strain>
    </source>
</reference>
<sequence length="244" mass="26926">MSNSLIFKSQMAQLNTVLIEERNLEVLYEQLTEKLAKAPEGFFKGAAMVAHLKAVDNVDLSWLMHLKTVFQKHHLLLVGVTQHPFDSETLFRAGLIDVPFLEPKSAKLEGEEEIKSVDLNEEIESSSPHFLSGAAHRKTLTVRHHVRSGQRIYAHGGDLVVIGTVNAGAEILADGNIHVLGTLRGKAFAGIKNNEDAHIFCLEMAAEIISIAGIYQNLEKNAHTTKNNCLITLNSDETMQITPL</sequence>
<protein>
    <recommendedName>
        <fullName evidence="1">Probable septum site-determining protein MinC</fullName>
    </recommendedName>
</protein>
<organism>
    <name type="scientific">Dichelobacter nodosus (strain VCS1703A)</name>
    <dbReference type="NCBI Taxonomy" id="246195"/>
    <lineage>
        <taxon>Bacteria</taxon>
        <taxon>Pseudomonadati</taxon>
        <taxon>Pseudomonadota</taxon>
        <taxon>Gammaproteobacteria</taxon>
        <taxon>Cardiobacteriales</taxon>
        <taxon>Cardiobacteriaceae</taxon>
        <taxon>Dichelobacter</taxon>
    </lineage>
</organism>
<comment type="function">
    <text evidence="1">Cell division inhibitor that blocks the formation of polar Z ring septums. Rapidly oscillates between the poles of the cell to destabilize FtsZ filaments that have formed before they mature into polar Z rings. Prevents FtsZ polymerization.</text>
</comment>
<comment type="subunit">
    <text evidence="1">Interacts with MinD and FtsZ.</text>
</comment>
<comment type="similarity">
    <text evidence="1">Belongs to the MinC family.</text>
</comment>
<proteinExistence type="inferred from homology"/>
<keyword id="KW-0131">Cell cycle</keyword>
<keyword id="KW-0132">Cell division</keyword>
<keyword id="KW-1185">Reference proteome</keyword>
<keyword id="KW-0717">Septation</keyword>
<accession>A5EY80</accession>
<evidence type="ECO:0000255" key="1">
    <source>
        <dbReference type="HAMAP-Rule" id="MF_00267"/>
    </source>
</evidence>